<accession>P04601</accession>
<accession>O09780</accession>
<accession>Q85587</accession>
<dbReference type="EMBL" id="X03187">
    <property type="protein sequence ID" value="CAA26946.1"/>
    <property type="status" value="ALT_SEQ"/>
    <property type="molecule type" value="Genomic_RNA"/>
</dbReference>
<dbReference type="EMBL" id="K03455">
    <property type="protein sequence ID" value="AAB50263.1"/>
    <property type="status" value="ALT_SEQ"/>
    <property type="molecule type" value="Genomic_RNA"/>
</dbReference>
<dbReference type="EMBL" id="AF033819">
    <property type="protein sequence ID" value="AAC82597.1"/>
    <property type="status" value="ALT_SEQ"/>
    <property type="molecule type" value="Genomic_RNA"/>
</dbReference>
<dbReference type="RefSeq" id="NP_057857.2">
    <property type="nucleotide sequence ID" value="NC_001802.1"/>
</dbReference>
<dbReference type="PDB" id="3RL2">
    <property type="method" value="X-ray"/>
    <property type="resolution" value="2.39 A"/>
    <property type="chains" value="C=73-82"/>
</dbReference>
<dbReference type="PDB" id="4NEE">
    <property type="method" value="X-ray"/>
    <property type="resolution" value="2.88 A"/>
    <property type="chains" value="C/E/H/K=63-203"/>
</dbReference>
<dbReference type="PDB" id="4WU5">
    <property type="method" value="X-ray"/>
    <property type="resolution" value="2.40 A"/>
    <property type="chains" value="C/F=134-141"/>
</dbReference>
<dbReference type="PDB" id="4WU7">
    <property type="method" value="X-ray"/>
    <property type="resolution" value="2.30 A"/>
    <property type="chains" value="C/F=136-141"/>
</dbReference>
<dbReference type="PDB" id="5HGA">
    <property type="method" value="X-ray"/>
    <property type="resolution" value="2.20 A"/>
    <property type="chains" value="C/F=136-141"/>
</dbReference>
<dbReference type="PDB" id="5HGB">
    <property type="method" value="X-ray"/>
    <property type="resolution" value="2.40 A"/>
    <property type="chains" value="C/F/I/L=134-141"/>
</dbReference>
<dbReference type="PDB" id="5HGD">
    <property type="method" value="X-ray"/>
    <property type="resolution" value="2.07 A"/>
    <property type="chains" value="C/F=136-142"/>
</dbReference>
<dbReference type="PDB" id="5HGH">
    <property type="method" value="X-ray"/>
    <property type="resolution" value="2.39 A"/>
    <property type="chains" value="C=134-142"/>
</dbReference>
<dbReference type="PDB" id="7K80">
    <property type="method" value="X-ray"/>
    <property type="resolution" value="2.40 A"/>
    <property type="chains" value="C/F=134-141"/>
</dbReference>
<dbReference type="PDB" id="7K81">
    <property type="method" value="X-ray"/>
    <property type="resolution" value="2.00 A"/>
    <property type="chains" value="C=134-141"/>
</dbReference>
<dbReference type="PDB" id="7YG3">
    <property type="method" value="X-ray"/>
    <property type="resolution" value="1.50 A"/>
    <property type="chains" value="B=106-114"/>
</dbReference>
<dbReference type="PDB" id="8GVB">
    <property type="method" value="X-ray"/>
    <property type="resolution" value="3.20 A"/>
    <property type="chains" value="P=134-141"/>
</dbReference>
<dbReference type="PDB" id="8GVG">
    <property type="method" value="X-ray"/>
    <property type="resolution" value="3.37 A"/>
    <property type="chains" value="P=134-141"/>
</dbReference>
<dbReference type="PDB" id="8GVI">
    <property type="method" value="X-ray"/>
    <property type="resolution" value="3.30 A"/>
    <property type="chains" value="P=134-141"/>
</dbReference>
<dbReference type="PDB" id="9BL9">
    <property type="method" value="X-ray"/>
    <property type="resolution" value="2.60 A"/>
    <property type="chains" value="C=134-141"/>
</dbReference>
<dbReference type="PDB" id="9BLA">
    <property type="method" value="X-ray"/>
    <property type="resolution" value="3.00 A"/>
    <property type="chains" value="C=134-141"/>
</dbReference>
<dbReference type="PDBsum" id="3RL2"/>
<dbReference type="PDBsum" id="4NEE"/>
<dbReference type="PDBsum" id="4WU5"/>
<dbReference type="PDBsum" id="4WU7"/>
<dbReference type="PDBsum" id="5HGA"/>
<dbReference type="PDBsum" id="5HGB"/>
<dbReference type="PDBsum" id="5HGD"/>
<dbReference type="PDBsum" id="5HGH"/>
<dbReference type="PDBsum" id="7K80"/>
<dbReference type="PDBsum" id="7K81"/>
<dbReference type="PDBsum" id="7YG3"/>
<dbReference type="PDBsum" id="8GVB"/>
<dbReference type="PDBsum" id="8GVG"/>
<dbReference type="PDBsum" id="8GVI"/>
<dbReference type="PDBsum" id="9BL9"/>
<dbReference type="PDBsum" id="9BLA"/>
<dbReference type="SMR" id="P04601"/>
<dbReference type="BioGRID" id="1205545">
    <property type="interactions" value="80"/>
</dbReference>
<dbReference type="DIP" id="DIP-61724N"/>
<dbReference type="ELM" id="P04601"/>
<dbReference type="IntAct" id="P04601">
    <property type="interactions" value="10"/>
</dbReference>
<dbReference type="GeneID" id="156110"/>
<dbReference type="KEGG" id="vg:156110"/>
<dbReference type="Reactome" id="R-HSA-162585">
    <property type="pathway name" value="Uncoating of the HIV Virion"/>
</dbReference>
<dbReference type="Reactome" id="R-HSA-162588">
    <property type="pathway name" value="Budding and maturation of HIV virion"/>
</dbReference>
<dbReference type="Reactome" id="R-HSA-162599">
    <property type="pathway name" value="Late Phase of HIV Life Cycle"/>
</dbReference>
<dbReference type="Reactome" id="R-HSA-164939">
    <property type="pathway name" value="Nef mediated downregulation of CD28 cell surface expression"/>
</dbReference>
<dbReference type="Reactome" id="R-HSA-164940">
    <property type="pathway name" value="Nef mediated downregulation of MHC class I complex cell surface expression"/>
</dbReference>
<dbReference type="Reactome" id="R-HSA-164944">
    <property type="pathway name" value="Nef and signal transduction"/>
</dbReference>
<dbReference type="Reactome" id="R-HSA-167590">
    <property type="pathway name" value="Nef Mediated CD4 Down-regulation"/>
</dbReference>
<dbReference type="Reactome" id="R-HSA-173107">
    <property type="pathway name" value="Binding and entry of HIV virion"/>
</dbReference>
<dbReference type="Reactome" id="R-HSA-175474">
    <property type="pathway name" value="Assembly Of The HIV Virion"/>
</dbReference>
<dbReference type="Reactome" id="R-HSA-182218">
    <property type="pathway name" value="Nef Mediated CD8 Down-regulation"/>
</dbReference>
<dbReference type="EvolutionaryTrace" id="P04601"/>
<dbReference type="Proteomes" id="UP000002241">
    <property type="component" value="Segment"/>
</dbReference>
<dbReference type="Proteomes" id="UP000105453">
    <property type="component" value="Segment"/>
</dbReference>
<dbReference type="GO" id="GO:0005576">
    <property type="term" value="C:extracellular region"/>
    <property type="evidence" value="ECO:0007669"/>
    <property type="project" value="UniProtKB-SubCell"/>
</dbReference>
<dbReference type="GO" id="GO:0044178">
    <property type="term" value="C:host cell Golgi membrane"/>
    <property type="evidence" value="ECO:0007669"/>
    <property type="project" value="UniProtKB-SubCell"/>
</dbReference>
<dbReference type="GO" id="GO:0020002">
    <property type="term" value="C:host cell plasma membrane"/>
    <property type="evidence" value="ECO:0007669"/>
    <property type="project" value="UniProtKB-SubCell"/>
</dbReference>
<dbReference type="GO" id="GO:0016020">
    <property type="term" value="C:membrane"/>
    <property type="evidence" value="ECO:0007669"/>
    <property type="project" value="UniProtKB-UniRule"/>
</dbReference>
<dbReference type="GO" id="GO:0044423">
    <property type="term" value="C:virion component"/>
    <property type="evidence" value="ECO:0007669"/>
    <property type="project" value="UniProtKB-UniRule"/>
</dbReference>
<dbReference type="GO" id="GO:0005525">
    <property type="term" value="F:GTP binding"/>
    <property type="evidence" value="ECO:0007669"/>
    <property type="project" value="UniProtKB-UniRule"/>
</dbReference>
<dbReference type="GO" id="GO:0017124">
    <property type="term" value="F:SH3 domain binding"/>
    <property type="evidence" value="ECO:0007669"/>
    <property type="project" value="UniProtKB-UniRule"/>
</dbReference>
<dbReference type="GO" id="GO:0046776">
    <property type="term" value="P:symbiont-mediated suppression of host antigen processing and presentation of peptide antigen via MHC class I"/>
    <property type="evidence" value="ECO:0007669"/>
    <property type="project" value="UniProtKB-UniRule"/>
</dbReference>
<dbReference type="GO" id="GO:0039505">
    <property type="term" value="P:symbiont-mediated suppression of host antigen processing and presentation of peptide antigen via MHC class II"/>
    <property type="evidence" value="ECO:0007669"/>
    <property type="project" value="UniProtKB-UniRule"/>
</dbReference>
<dbReference type="GO" id="GO:0140321">
    <property type="term" value="P:symbiont-mediated suppression of host autophagy"/>
    <property type="evidence" value="ECO:0007669"/>
    <property type="project" value="UniProtKB-KW"/>
</dbReference>
<dbReference type="FunFam" id="3.30.62.10:FF:000001">
    <property type="entry name" value="Protein Nef"/>
    <property type="match status" value="1"/>
</dbReference>
<dbReference type="FunFam" id="4.10.890.10:FF:000001">
    <property type="entry name" value="Protein Nef"/>
    <property type="match status" value="1"/>
</dbReference>
<dbReference type="Gene3D" id="4.10.890.10">
    <property type="entry name" value="HIV 1 nef anchor domain"/>
    <property type="match status" value="1"/>
</dbReference>
<dbReference type="Gene3D" id="3.30.62.10">
    <property type="entry name" value="Nef Regulatory Factor"/>
    <property type="match status" value="1"/>
</dbReference>
<dbReference type="HAMAP" id="MF_04078">
    <property type="entry name" value="NEF_HIV"/>
    <property type="match status" value="1"/>
</dbReference>
<dbReference type="IDEAL" id="IID90019"/>
<dbReference type="InterPro" id="IPR027480">
    <property type="entry name" value="HIV-1_Nef_anchor_sf"/>
</dbReference>
<dbReference type="InterPro" id="IPR027481">
    <property type="entry name" value="HIV-1_Nef_core_sf"/>
</dbReference>
<dbReference type="InterPro" id="IPR001558">
    <property type="entry name" value="HIV_Nef"/>
</dbReference>
<dbReference type="Pfam" id="PF00469">
    <property type="entry name" value="F-protein"/>
    <property type="match status" value="1"/>
</dbReference>
<dbReference type="SUPFAM" id="SSF55671">
    <property type="entry name" value="Regulatory factor Nef"/>
    <property type="match status" value="1"/>
</dbReference>
<feature type="initiator methionine" description="Removed; by host" evidence="1">
    <location>
        <position position="1"/>
    </location>
</feature>
<feature type="chain" id="PRO_0000038365" description="Protein Nef" evidence="1">
    <location>
        <begin position="2"/>
        <end position="206"/>
    </location>
</feature>
<feature type="chain" id="PRO_0000038366" description="C-terminal core protein" evidence="1">
    <location>
        <begin position="58"/>
        <end position="206"/>
    </location>
</feature>
<feature type="region of interest" description="Acidic; interacts with host PACS1 and PACS2; stabilizes the interaction of NEF/MHC-I with host AP1M1; necessary for MHC-I internalization" evidence="1 2 3">
    <location>
        <begin position="62"/>
        <end position="65"/>
    </location>
</feature>
<feature type="region of interest" description="SH3-binding; interaction with Src family tyrosine kinases" evidence="1">
    <location>
        <begin position="69"/>
        <end position="78"/>
    </location>
</feature>
<feature type="region of interest" description="Mediates dimerization, Nef-PTE1 interaction" evidence="1">
    <location>
        <begin position="108"/>
        <end position="124"/>
    </location>
</feature>
<feature type="region of interest" description="Binding to ATP6V1H" evidence="1">
    <location>
        <begin position="148"/>
        <end position="180"/>
    </location>
</feature>
<feature type="short sequence motif" description="PxxP; stabilizes the interaction of NEF/MHC-I with host AP1M1; necessary for MHC-I internalization" evidence="1 3">
    <location>
        <begin position="72"/>
        <end position="75"/>
    </location>
</feature>
<feature type="short sequence motif" description="Dileucine internalization motif; necessary for CD4 internalization" evidence="1 12">
    <location>
        <begin position="164"/>
        <end position="165"/>
    </location>
</feature>
<feature type="short sequence motif" description="Diacidic; necessary for CD4 internalization" evidence="1">
    <location>
        <begin position="174"/>
        <end position="175"/>
    </location>
</feature>
<feature type="site" description="Might play a role in AP-1 recruitment to the Nef-MHC-I complex" evidence="1 6">
    <location>
        <position position="20"/>
    </location>
</feature>
<feature type="site" description="Cleavage; by viral protease" evidence="1">
    <location>
        <begin position="57"/>
        <end position="58"/>
    </location>
</feature>
<feature type="modified residue" description="Phosphoserine; by host" evidence="1">
    <location>
        <position position="6"/>
    </location>
</feature>
<feature type="lipid moiety-binding region" description="N-myristoyl glycine; by host" evidence="1">
    <location>
        <position position="2"/>
    </location>
</feature>
<feature type="mutagenesis site" description="Complete loss of Nef-induced MHC-I down-regulation, MHC-I is internalized but not sequestred in TGN." evidence="3">
    <original>M</original>
    <variation>A</variation>
    <location>
        <position position="20"/>
    </location>
</feature>
<feature type="mutagenesis site" description="Complete loss of Nef-induced MHC-I down-regulation, MHC-I is not internalized. Reduced interaction with host PACS1 and PACS2." evidence="7 8">
    <original>EEEE</original>
    <variation>AAAA</variation>
    <location>
        <begin position="62"/>
        <end position="65"/>
    </location>
</feature>
<feature type="mutagenesis site" description="About 50% loss of Nef-induced MHC-I down-regulation." evidence="7 8">
    <original>EEEE</original>
    <variation>AAEA</variation>
    <location>
        <begin position="62"/>
        <end position="65"/>
    </location>
</feature>
<feature type="mutagenesis site" description="About 50% loss of Nef-induced MHC-I down-regulation." evidence="7 8">
    <original>EEEE</original>
    <variation>AEAA</variation>
    <location>
        <begin position="62"/>
        <end position="65"/>
    </location>
</feature>
<feature type="mutagenesis site" description="No effect on Nef-induced MHC-I down-regulation." evidence="7 8">
    <original>EEEE</original>
    <variation>DDDD</variation>
    <location>
        <begin position="62"/>
        <end position="65"/>
    </location>
</feature>
<feature type="mutagenesis site" description="About 50% loss of Nef-induced MHC-I down-regulation.">
    <original>EEE</original>
    <variation>AAA</variation>
    <location>
        <begin position="62"/>
        <end position="64"/>
    </location>
</feature>
<feature type="mutagenesis site" description="Almost no effect on Nef-induced MHC-I down-regulation.">
    <original>EE</original>
    <variation>AA</variation>
    <location>
        <begin position="62"/>
        <end position="63"/>
    </location>
</feature>
<feature type="mutagenesis site" description="About 50% loss of Nef-induced MHC-I down-regulation." evidence="3">
    <original>EEE</original>
    <variation>AAA</variation>
    <location>
        <begin position="63"/>
        <end position="65"/>
    </location>
</feature>
<feature type="mutagenesis site" description="Almost no effect on Nef-induced MHC-I down-regulation.">
    <original>EE</original>
    <variation>AA</variation>
    <location>
        <begin position="63"/>
        <end position="64"/>
    </location>
</feature>
<feature type="mutagenesis site" description="Almost no effect on Nef-induced MHC-I down-regulation.">
    <original>EE</original>
    <variation>AA</variation>
    <location>
        <begin position="64"/>
        <end position="65"/>
    </location>
</feature>
<feature type="mutagenesis site" description="Complete loss of Nef-induced MHC-I down-regulation, MHC-I is not internalized; when associated with A-75." evidence="3">
    <original>P</original>
    <variation>A</variation>
    <location>
        <position position="72"/>
    </location>
</feature>
<feature type="mutagenesis site" description="Complete loss of Nef-induced MHC-I down-regulation, MHC-I is not internalized; when associated with A-72." evidence="3">
    <original>P</original>
    <variation>A</variation>
    <location>
        <position position="75"/>
    </location>
</feature>
<feature type="mutagenesis site" description="Complete loss of Nef-induced MHC-I down-regulation, CD4 down-regulation, and enhancement of infectivity. Activates PAK2 twofold over wild-type levels.">
    <original>D</original>
    <variation>E</variation>
    <location>
        <position position="123"/>
    </location>
</feature>
<feature type="sequence conflict" description="In Ref. 1; CAA26946." evidence="14" ref="1">
    <original>R</original>
    <variation>G</variation>
    <location>
        <position position="29"/>
    </location>
</feature>
<feature type="helix" evidence="16">
    <location>
        <begin position="81"/>
        <end position="94"/>
    </location>
</feature>
<feature type="helix" evidence="16">
    <location>
        <begin position="104"/>
        <end position="118"/>
    </location>
</feature>
<feature type="strand" evidence="16">
    <location>
        <begin position="130"/>
        <end position="132"/>
    </location>
</feature>
<feature type="strand" evidence="16">
    <location>
        <begin position="136"/>
        <end position="138"/>
    </location>
</feature>
<feature type="strand" evidence="16">
    <location>
        <begin position="143"/>
        <end position="147"/>
    </location>
</feature>
<feature type="helix" evidence="16">
    <location>
        <begin position="150"/>
        <end position="157"/>
    </location>
</feature>
<feature type="helix" evidence="16">
    <location>
        <begin position="167"/>
        <end position="170"/>
    </location>
</feature>
<feature type="strand" evidence="16">
    <location>
        <begin position="172"/>
        <end position="175"/>
    </location>
</feature>
<feature type="strand" evidence="16">
    <location>
        <begin position="181"/>
        <end position="185"/>
    </location>
</feature>
<feature type="helix" evidence="16">
    <location>
        <begin position="188"/>
        <end position="191"/>
    </location>
</feature>
<feature type="helix" evidence="16">
    <location>
        <begin position="194"/>
        <end position="198"/>
    </location>
</feature>
<feature type="helix" evidence="16">
    <location>
        <begin position="200"/>
        <end position="202"/>
    </location>
</feature>
<comment type="function">
    <text evidence="1 13">Factor of infectivity and pathogenicity, required for optimal virus replication. Alters numerous pathways of T-lymphocyte function and down-regulates immunity surface molecules in order to evade host defense and increase viral infectivity. Alters the functionality of other immunity cells, like dendritic cells, monocytes/macrophages and NK cells.</text>
</comment>
<comment type="function">
    <text evidence="1 3 11 12">In infected CD4(+) T-lymphocytes, down-regulates the surface MHC-I, mature MHC-II, CD4, CD28, CCR5 and CXCR4 molecules. Mediates internalization and degradation of host CD4 through the interaction of with the cytoplasmic tail of CD4, the recruitment of AP-2 (clathrin adapter protein complex 2), internalization through clathrin coated pits, and subsequent transport to endosomes and lysosomes for degradation. Diverts host MHC-I molecules to the trans-Golgi network-associated endosomal compartments by an endocytic pathway to finally target them for degradation. MHC-I down-regulation may involve AP-1 (clathrin adapter protein complex 1) or possibly Src family kinase-ZAP70/Syk-PI3K cascade recruited by PACS2. In consequence infected cells are masked for immune recognition by cytotoxic T-lymphocytes. Decreasing the number of immune receptors also prevents reinfection by more HIV particles (superinfection). Down-regulates host SERINC3 and SERINC5 thereby excluding these proteins from the viral particles. Virion infectivity is drastically higher when SERINC3 or SERINC5 are excluded from the viral envelope, because these host antiviral proteins impair the membrane fusion event necessary for subsequent virion penetration.</text>
</comment>
<comment type="function">
    <text evidence="1">Bypasses host T-cell signaling by inducing a transcriptional program nearly identical to that of anti-CD3 cell activation. Interaction with TCR-zeta chain up-regulates the Fas ligand (FasL). Increasing surface FasL molecules and decreasing surface MHC-I molecules on infected CD4(+) cells send attacking cytotoxic CD8+ T-lymphocytes into apoptosis.</text>
</comment>
<comment type="function">
    <text evidence="1">Plays a role in optimizing the host cell environment for viral replication without causing cell death by apoptosis. Protects the infected cells from apoptosis in order to keep them alive until the next virus generation is ready to strike. Inhibits the Fas and TNFR-mediated death signals by blocking MAP3K5/ASK1. Decreases the half-life of TP53, protecting the infected cell against p53-mediated apoptosis. Inhibits the apoptotic signals regulated by the Bcl-2 family proteins through the formation of a Nef/PI3-kinase/PAK2 complex that leads to activation of PAK2 and induces phosphorylation of Bad.</text>
</comment>
<comment type="function">
    <text evidence="1 9">Extracellular Nef protein targets CD4(+) T-lymphocytes for apoptosis by interacting with CXCR4 surface receptors.</text>
</comment>
<comment type="subunit">
    <text evidence="1 2 4 6 7 8 10 11">Monomer; cytosolic form. Homodimer; membrane bound form. Interacts with Nef associated p21-activated kinase (PAK2); this interaction activates PAK2. Associates with the Nef-MHC-I-AP1 complex; this complex is required for MHC-I internalization. Interacts (via C-terminus) with host PI3-kinase. Interacts with host PACS1; this interaction seems to be weak. Interacts with host PACS2. Interacts with host LCK and MAPK3; these interactions inhibit the kinase activity of the latter. Interacts with host ATP6V1H; this interaction may play a role in CD4 endocytosis. Associates with the CD4-Nef-AP2 complex; this complex is required for CD4 internalization. Interacts with host AP2 subunit alpha and AP2 subunit sigma2. Interacts with TCR-zeta chain; this interaction up-regulates the Fas ligand (FasL) surface expression. Interacts with host HCK, LYN, and SRC; these interactions activate the Src family kinases. Interacts with MAP3K5; this interaction inhibits the Fas and TNFR-mediated death signals. Interacts with beta-COP and PTE1. Interacts with human RACK1; this increases Nef phosphorylation by PKC. Interacts with TP53; this interaction decreases the half-life of TP53, protecting the infected cell against p53-mediated apoptosis.</text>
</comment>
<comment type="interaction">
    <interactant intactId="EBI-6164028">
        <id>P04601</id>
    </interactant>
    <interactant intactId="EBI-1237371">
        <id>O14734</id>
        <label>ACOT8</label>
    </interactant>
    <organismsDiffer>true</organismsDiffer>
    <experiments>7</experiments>
</comment>
<comment type="subcellular location">
    <subcellularLocation>
        <location evidence="1">Host cell membrane</location>
        <topology evidence="1">Lipid-anchor</topology>
        <orientation evidence="1">Cytoplasmic side</orientation>
    </subcellularLocation>
    <subcellularLocation>
        <location evidence="1">Virion</location>
    </subcellularLocation>
    <subcellularLocation>
        <location evidence="1 9">Secreted</location>
    </subcellularLocation>
    <subcellularLocation>
        <location evidence="1">Host Golgi apparatus membrane</location>
    </subcellularLocation>
    <text evidence="1 9">TGN localization requires PACS1. Associates with the inner plasma membrane through its N-terminal domain. Nef stimulates its own export via the release of exosomes. Incorporated in virions at a rate of about 10 molecules per virion, where it is cleaved.</text>
</comment>
<comment type="induction">
    <text evidence="1 5">Expressed early in the viral replication cycle.</text>
</comment>
<comment type="domain">
    <text evidence="1">The dileucine internalization motif and a diacidic motif seem to be required for binding to AP-2.</text>
</comment>
<comment type="domain">
    <text evidence="1 3">The acidic region binds to the sorting protein PACS-2, which targets Nef to the paranuclear region, enabling the PxxP motif to direct assembly of an SFK/ZAP-70/PI3K complex that accelerates endocytosis of cell-surface MHC-I.</text>
</comment>
<comment type="domain">
    <text evidence="1">The N-terminal domain is composed of the N-myristoyl glycine and of a cluster of positively charged amino acids. It is required for inner plasma membrane targeting of Nef and virion incorporation, and thereby for infectivity. This domain is also involved in binding to TP53.</text>
</comment>
<comment type="domain">
    <text evidence="1">The SH3-binding domain constituted of PxxP motifs mediates binding to several Src family proteins thereby regulating their tyrosine kinase activity. The same motifs also mediates the association with MAPK3, PI3-kinase and TCR-zeta.</text>
</comment>
<comment type="PTM">
    <text evidence="1">Phosphorylated on serine residues, probably by host PKCdelta and theta.</text>
</comment>
<comment type="PTM">
    <text evidence="1">Myristoylated.</text>
</comment>
<comment type="PTM">
    <text evidence="1">The virion-associated Nef proteins are cleaved by the viral protease to release the soluble C-terminal core protein. Nef is probably cleaved concomitantly with viral structural proteins on maturation of virus particles.</text>
</comment>
<comment type="miscellaneous">
    <text evidence="1">HIV-1 lineages are divided in three main groups, M (for Major), O (for Outlier), and N (for New, or Non-M, Non-O). The vast majority of strains found worldwide belong to the group M. Group O seems to be endemic to and largely confined to Cameroon and neighboring countries in West Central Africa, where these viruses represent a small minority of HIV-1 strains. The group N is represented by a limited number of isolates from Cameroonian persons. The group M is further subdivided in 9 clades or subtypes (A to D, F to H, J and K).</text>
</comment>
<comment type="similarity">
    <text evidence="1">Belongs to the lentivirus primate group Nef protein family.</text>
</comment>
<comment type="sequence caution" evidence="14">
    <conflict type="miscellaneous discrepancy">
        <sequence resource="EMBL-CDS" id="AAB50263"/>
    </conflict>
    <text>Readthrough of a premature stop codon in position 123 that truncates the Nef protein. The sequence displayed is that of wild-type full-length HXB2-R7 clone.</text>
</comment>
<comment type="sequence caution" evidence="14">
    <conflict type="miscellaneous discrepancy">
        <sequence resource="EMBL-CDS" id="AAC82597"/>
    </conflict>
    <text>Readthrough of a premature stop codon in position 123 that truncates the Nef protein. The sequence displayed is that of wild-type full-length HXB2-R7 clone.</text>
</comment>
<comment type="sequence caution" evidence="14">
    <conflict type="miscellaneous discrepancy">
        <sequence resource="EMBL-CDS" id="CAA26946"/>
    </conflict>
    <text>Readthrough of a premature stop codon in position 123 that truncates the Nef protein. The sequence displayed is that of wild-type full-length HXB2-R7 clone.</text>
</comment>
<proteinExistence type="evidence at protein level"/>
<organism>
    <name type="scientific">Human immunodeficiency virus type 1 group M subtype B (isolate HXB2)</name>
    <name type="common">HIV-1</name>
    <dbReference type="NCBI Taxonomy" id="11706"/>
    <lineage>
        <taxon>Viruses</taxon>
        <taxon>Riboviria</taxon>
        <taxon>Pararnavirae</taxon>
        <taxon>Artverviricota</taxon>
        <taxon>Revtraviricetes</taxon>
        <taxon>Ortervirales</taxon>
        <taxon>Retroviridae</taxon>
        <taxon>Orthoretrovirinae</taxon>
        <taxon>Lentivirus</taxon>
        <taxon>Human immunodeficiency virus type 1</taxon>
    </lineage>
</organism>
<gene>
    <name evidence="1" type="primary">nef</name>
</gene>
<reference key="1">
    <citation type="journal article" date="1985" name="Nucleic Acids Res.">
        <title>Polymorphism of the 3' open reading frame of the virus associated with the acquired immune deficiency syndrome, human T-lymphotropic virus type III.</title>
        <authorList>
            <person name="Ratner L."/>
            <person name="Starcich B.R."/>
            <person name="Josephs S.F."/>
            <person name="Hahn B.H."/>
            <person name="Reddy E.P."/>
            <person name="Livak K.J."/>
            <person name="Petteway S.R. Jr."/>
            <person name="Pearson M.L."/>
            <person name="Haseltine W.A."/>
            <person name="Arya S.K."/>
            <person name="Wong-staal F."/>
        </authorList>
    </citation>
    <scope>NUCLEOTIDE SEQUENCE [GENOMIC RNA]</scope>
</reference>
<reference key="2">
    <citation type="journal article" date="1987" name="AIDS Res. Hum. Retroviruses">
        <title>Complete nucleotide sequences of functional clones of the AIDS virus.</title>
        <authorList>
            <person name="Ratner L."/>
            <person name="Fisher A."/>
            <person name="Jagodzinski L.L."/>
            <person name="Mitsuya H."/>
            <person name="Liou R.-S."/>
            <person name="Gallo R.C."/>
            <person name="Wong-Staal F."/>
        </authorList>
    </citation>
    <scope>NUCLEOTIDE SEQUENCE [GENOMIC RNA]</scope>
</reference>
<reference key="3">
    <citation type="submission" date="1997-04" db="EMBL/GenBank/DDBJ databases">
        <authorList>
            <person name="Ratner L."/>
            <person name="Fisher A."/>
            <person name="Jagodzinski L.L."/>
            <person name="Mitsuya H."/>
            <person name="Liou R.-S."/>
            <person name="Gallo R.C."/>
            <person name="Wong-Staal F."/>
        </authorList>
    </citation>
    <scope>SEQUENCE REVISION</scope>
</reference>
<reference key="4">
    <citation type="journal article" date="1991" name="Oncogene">
        <title>Kinetics of early HIV-1 gene expression in infected H9 cells assessed by PCR.</title>
        <authorList>
            <person name="Hewlett I.K."/>
            <person name="Geyer S.J."/>
            <person name="Hawthorne C.A."/>
            <person name="Ruta M."/>
            <person name="Epstein J.S."/>
        </authorList>
    </citation>
    <scope>INDUCTION</scope>
</reference>
<reference key="5">
    <citation type="journal article" date="1994" name="Cell">
        <title>Nef induces CD4 endocytosis: requirement for a critical dileucine motif in the membrane-proximal CD4 cytoplasmic domain.</title>
        <authorList>
            <person name="Aiken C."/>
            <person name="Konner J."/>
            <person name="Landau N.R."/>
            <person name="Lenburg M.E."/>
            <person name="Trono D."/>
        </authorList>
    </citation>
    <scope>FUNCTION</scope>
    <scope>DILEUCINE MOTIF</scope>
    <source>
        <strain>Isolate HXB2-R7</strain>
    </source>
</reference>
<reference key="6">
    <citation type="journal article" date="1998" name="Nature">
        <title>HIV-1 Nef protein protects infected primary cells against killing by cytotoxic T lymphocytes.</title>
        <authorList>
            <person name="Collins K.L."/>
            <person name="Chen B.K."/>
            <person name="Kalams S.A."/>
            <person name="Walker B.D."/>
            <person name="Baltimore D."/>
        </authorList>
    </citation>
    <scope>FUNCTION</scope>
</reference>
<reference key="7">
    <citation type="journal article" date="1999" name="J. Virol.">
        <title>Nef-induced CD4 and major histocompatibility complex class I (MHC-I) down-regulation are governed by distinct determinants: N-terminal alpha helix and proline repeat of Nef selectively regulate MHC-I trafficking.</title>
        <authorList>
            <person name="Mangasarian A."/>
            <person name="Piguet V."/>
            <person name="Wang J.-K."/>
            <person name="Chen Y.-L."/>
            <person name="Trono D."/>
        </authorList>
    </citation>
    <scope>FUNCTION</scope>
    <source>
        <strain>Isolate HXB2-R7</strain>
    </source>
</reference>
<reference key="8">
    <citation type="journal article" date="2000" name="Nat. Cell Biol.">
        <title>HIV-1 Nef protein binds to the cellular protein PACS-1 to downregulate class I major histocompatibility complexes.</title>
        <authorList>
            <person name="Piguet V."/>
            <person name="Wan L."/>
            <person name="Borel C."/>
            <person name="Mangasarian A."/>
            <person name="Demaurex N."/>
            <person name="Thomas G."/>
            <person name="Trono D."/>
        </authorList>
    </citation>
    <scope>FUNCTION</scope>
    <scope>INTERACTION WITH HOST PACS1</scope>
    <scope>SUBCELLULAR LOCATION</scope>
    <source>
        <strain>Isolate HXB2-R7</strain>
    </source>
</reference>
<reference key="9">
    <citation type="journal article" date="2001" name="Proc. Natl. Acad. Sci. U.S.A.">
        <title>HIV-1 Nef impairs MHC class II antigen presentation and surface expression.</title>
        <authorList>
            <person name="Stumptner-Cuvelette P."/>
            <person name="Morchoisne S."/>
            <person name="Dugast M."/>
            <person name="Le Gall S."/>
            <person name="Raposo G."/>
            <person name="Schwartz O."/>
            <person name="Benaroch P."/>
        </authorList>
    </citation>
    <scope>FUNCTION</scope>
</reference>
<reference key="10">
    <citation type="journal article" date="2002" name="Cell">
        <title>HIV-1 Nef downregulates MHC-I by a PACS-1- and PI3K-regulated ARF6 endocytic pathway.</title>
        <authorList>
            <person name="Blagoveshchenskaya A.D."/>
            <person name="Thomas L."/>
            <person name="Feliciangeli S.F."/>
            <person name="Hung C.-H."/>
            <person name="Thomas G."/>
        </authorList>
    </citation>
    <scope>FUNCTION</scope>
    <scope>MUTAGENESIS OF MET-20; 63-GLU--GLU-65; PRO-72 AND PRO-75</scope>
    <scope>REGION ACIDIC</scope>
    <source>
        <strain>Isolate HXB2D</strain>
    </source>
</reference>
<reference key="11">
    <citation type="journal article" date="2004" name="J. Cell Biol.">
        <title>HIV-1 Nef disrupts MHC-I trafficking by recruiting AP-1 to the MHC-I cytoplasmic tail.</title>
        <authorList>
            <person name="Roeth J.F."/>
            <person name="Williams M."/>
            <person name="Kasper M.R."/>
            <person name="Filzen T.M."/>
            <person name="Collins K.L."/>
        </authorList>
    </citation>
    <scope>IDENTIFICATION IN A AP1-NEF-MHC-I COMPLEX</scope>
</reference>
<reference key="12">
    <citation type="journal article" date="2008" name="J. Virol.">
        <title>Functional characterization of the human immunodeficiency virus type 1 Nef acidic domain.</title>
        <authorList>
            <person name="Baugh L.L."/>
            <person name="Garcia J.V."/>
            <person name="Foster J.L."/>
        </authorList>
    </citation>
    <scope>ACIDIC REGION</scope>
    <scope>INTERACTION WITH HOST PACS1</scope>
    <scope>MUTAGENESIS OF 62-GLU--GLU-65</scope>
</reference>
<reference key="13">
    <citation type="journal article" date="2008" name="J. Biol. Chem.">
        <title>HIV-1 Nef binds PACS-2 to assemble a multikinase cascade that triggers major histocompatibility complex class I (MHC-I) down-regulation: analysis using short interfering RNA and knock-out mice.</title>
        <authorList>
            <person name="Atkins K.M."/>
            <person name="Thomas L."/>
            <person name="Youker R.T."/>
            <person name="Harriff M.J."/>
            <person name="Pissani F."/>
            <person name="You H."/>
            <person name="Thomas G."/>
        </authorList>
    </citation>
    <scope>INTERACTION WITH HOST PACS2</scope>
    <scope>INTERACTION WITH HOST PACS1</scope>
    <scope>MUTAGENESIS OF 62-GLU--GLU-65</scope>
</reference>
<reference key="14">
    <citation type="journal article" date="2008" name="J. Biol. Chem.">
        <title>The tyrosine binding pocket in the adaptor protein 1 (AP-1) mu1 subunit is necessary for Nef to recruit AP-1 to the major histocompatibility complex class I cytoplasmic tail.</title>
        <authorList>
            <person name="Wonderlich E.R."/>
            <person name="Williams M."/>
            <person name="Collins K.L."/>
        </authorList>
    </citation>
    <scope>FUNCTION</scope>
    <scope>IDENTIFICATION IN A AP1(MU)-NEF-MHC-I COMPLEX</scope>
</reference>
<reference key="15">
    <citation type="journal article" date="2009" name="J. Virol.">
        <title>Human immunodeficiency virus type 1 Nef incorporation into virions does not increase infectivity.</title>
        <authorList>
            <person name="Laguette N."/>
            <person name="Benichou S."/>
            <person name="Basmaciogullari S."/>
        </authorList>
    </citation>
    <scope>CLEAVAGE BY VIRAL PROTEASE</scope>
</reference>
<reference key="16">
    <citation type="journal article" date="2010" name="Traffic">
        <title>HIV Nef is secreted in exosomes and triggers apoptosis in bystander CD4(+) T cells.</title>
        <authorList>
            <person name="Lenassi M."/>
            <person name="Cagney G."/>
            <person name="Liao M."/>
            <person name="Vaupotic T."/>
            <person name="Bartholomeeusen K."/>
            <person name="Cheng Y."/>
            <person name="Krogan N.J."/>
            <person name="Plemenitas A."/>
            <person name="Peterlin B.M."/>
        </authorList>
    </citation>
    <scope>FUNCTION</scope>
    <scope>SUBCELLULAR LOCATION</scope>
</reference>
<reference key="17">
    <citation type="journal article" date="2009" name="PLoS ONE">
        <title>An MHC-I cytoplasmic domain/HIV-1 Nef fusion protein binds directly to the mu subunit of the AP-1 endosomal coat complex.</title>
        <authorList>
            <person name="Singh R.K."/>
            <person name="Lau D."/>
            <person name="Noviello C.M."/>
            <person name="Ghosh P."/>
            <person name="Guatelli J.C."/>
        </authorList>
    </citation>
    <scope>FUNCTION</scope>
    <scope>IDENTIFICATION IN A AP1(MU)-NEF-MHC-I COMPLEX</scope>
</reference>
<reference evidence="15" key="18">
    <citation type="journal article" date="2014" name="Elife">
        <title>How HIV-1 Nef hijacks the AP-2 clathrin adaptor to downregulate CD4.</title>
        <authorList>
            <person name="Ren X."/>
            <person name="Park S.Y."/>
            <person name="Bonifacino J.S."/>
            <person name="Hurley J.H."/>
        </authorList>
    </citation>
    <scope>X-RAY CRYSTALLOGRAPHY (2.88 ANGSTROMS) OF 63-203</scope>
    <scope>INTERACTION WITH HOST AP2 SUBUNIT ALPHA</scope>
    <scope>INTERACTION WITH HOST AP2 SUBUNIT SIGMA2</scope>
</reference>
<organismHost>
    <name type="scientific">Homo sapiens</name>
    <name type="common">Human</name>
    <dbReference type="NCBI Taxonomy" id="9606"/>
</organismHost>
<name>NEF_HV1H2</name>
<keyword id="KW-0002">3D-structure</keyword>
<keyword id="KW-0014">AIDS</keyword>
<keyword id="KW-0053">Apoptosis</keyword>
<keyword id="KW-0244">Early protein</keyword>
<keyword id="KW-1032">Host cell membrane</keyword>
<keyword id="KW-1040">Host Golgi apparatus</keyword>
<keyword id="KW-1043">Host membrane</keyword>
<keyword id="KW-0945">Host-virus interaction</keyword>
<keyword id="KW-1080">Inhibition of host adaptive immune response by virus</keyword>
<keyword id="KW-1083">Inhibition of host autophagy by virus</keyword>
<keyword id="KW-1115">Inhibition of host MHC class I molecule presentation by virus</keyword>
<keyword id="KW-1116">Inhibition of host MHC class II molecule presentation by virus</keyword>
<keyword id="KW-0449">Lipoprotein</keyword>
<keyword id="KW-0472">Membrane</keyword>
<keyword id="KW-0519">Myristate</keyword>
<keyword id="KW-0597">Phosphoprotein</keyword>
<keyword id="KW-1185">Reference proteome</keyword>
<keyword id="KW-0964">Secreted</keyword>
<keyword id="KW-0729">SH3-binding</keyword>
<keyword id="KW-0899">Viral immunoevasion</keyword>
<keyword id="KW-0946">Virion</keyword>
<keyword id="KW-0843">Virulence</keyword>
<protein>
    <recommendedName>
        <fullName evidence="1">Protein Nef</fullName>
    </recommendedName>
    <alternativeName>
        <fullName evidence="1">3'ORF</fullName>
    </alternativeName>
    <alternativeName>
        <fullName evidence="1">Negative factor</fullName>
        <shortName evidence="1">F-protein</shortName>
    </alternativeName>
    <component>
        <recommendedName>
            <fullName evidence="1">C-terminal core protein</fullName>
        </recommendedName>
    </component>
</protein>
<evidence type="ECO:0000255" key="1">
    <source>
        <dbReference type="HAMAP-Rule" id="MF_04078"/>
    </source>
</evidence>
<evidence type="ECO:0000269" key="2">
    <source>
    </source>
</evidence>
<evidence type="ECO:0000269" key="3">
    <source>
    </source>
</evidence>
<evidence type="ECO:0000269" key="4">
    <source>
    </source>
</evidence>
<evidence type="ECO:0000269" key="5">
    <source>
    </source>
</evidence>
<evidence type="ECO:0000269" key="6">
    <source>
    </source>
</evidence>
<evidence type="ECO:0000269" key="7">
    <source>
    </source>
</evidence>
<evidence type="ECO:0000269" key="8">
    <source>
    </source>
</evidence>
<evidence type="ECO:0000269" key="9">
    <source>
    </source>
</evidence>
<evidence type="ECO:0000269" key="10">
    <source>
    </source>
</evidence>
<evidence type="ECO:0000269" key="11">
    <source>
    </source>
</evidence>
<evidence type="ECO:0000269" key="12">
    <source>
    </source>
</evidence>
<evidence type="ECO:0000269" key="13">
    <source>
    </source>
</evidence>
<evidence type="ECO:0000305" key="14"/>
<evidence type="ECO:0007744" key="15">
    <source>
        <dbReference type="PDB" id="4NEE"/>
    </source>
</evidence>
<evidence type="ECO:0007829" key="16">
    <source>
        <dbReference type="PDB" id="4NEE"/>
    </source>
</evidence>
<sequence length="206" mass="23469">MGGKWSKSSVIGWPTVRERMRRAEPAADRVGAASRDLEKHGAITSSNTAATNAACAWLEAQEEEEVGFPVTPQVPLRPMTYKAAVDLSHFLKEKGGLEGLIHSQRRQDILDLWIYHTQGYFPDWQNYTPGPGVRYPLTFGWCYKLVPVEPDKIEEANKGENTSLLHPVSLHGMDDPEREVLEWRFDSRLAFHHVARELHPEYFKNC</sequence>